<accession>Q6R7C8</accession>
<protein>
    <recommendedName>
        <fullName>Uncharacterized protein ORF101</fullName>
    </recommendedName>
</protein>
<keyword id="KW-1185">Reference proteome</keyword>
<proteinExistence type="predicted"/>
<sequence>MDCVTYAKIIMGNCNKTAVIHSTKDDRDISLCEKEIKSTLNLGKREREFQGELKKRFNNIILKTESRQGSKVDYNRDCIVDMIYTPWDVKEYATMDKMLFLKFSNGARLATTYNKKRLAVNLRVYNNINNFELINEGQLAVFFYVWRNTAGMKLLDYKHCIVNKISSVLFSEENIREYIRCILTDNEYDYVEANDMTHDWKFDNYFIEK</sequence>
<gene>
    <name type="ORF">ORF101</name>
</gene>
<organismHost>
    <name type="scientific">Magallana gigas</name>
    <name type="common">Pacific oyster</name>
    <name type="synonym">Crassostrea gigas</name>
    <dbReference type="NCBI Taxonomy" id="29159"/>
</organismHost>
<organismHost>
    <name type="scientific">Pecten maximus</name>
    <name type="common">King scallop</name>
    <name type="synonym">Pilgrim's clam</name>
    <dbReference type="NCBI Taxonomy" id="6579"/>
</organismHost>
<name>Y101_OSHVF</name>
<organism>
    <name type="scientific">Ostreid herpesvirus 1 (isolate France)</name>
    <name type="common">OsHV-1</name>
    <name type="synonym">Pacific oyster herpesvirus</name>
    <dbReference type="NCBI Taxonomy" id="654903"/>
    <lineage>
        <taxon>Viruses</taxon>
        <taxon>Duplodnaviria</taxon>
        <taxon>Heunggongvirae</taxon>
        <taxon>Peploviricota</taxon>
        <taxon>Herviviricetes</taxon>
        <taxon>Herpesvirales</taxon>
        <taxon>Malacoherpesviridae</taxon>
        <taxon>Ostreavirus</taxon>
        <taxon>Ostreavirus ostreidmalaco1</taxon>
        <taxon>Ostreid herpesvirus 1</taxon>
    </lineage>
</organism>
<dbReference type="EMBL" id="AY509253">
    <property type="protein sequence ID" value="AAS00987.1"/>
    <property type="molecule type" value="Genomic_DNA"/>
</dbReference>
<dbReference type="RefSeq" id="YP_024640.1">
    <property type="nucleotide sequence ID" value="NC_005881.2"/>
</dbReference>
<dbReference type="KEGG" id="vg:2948217"/>
<dbReference type="Proteomes" id="UP000007021">
    <property type="component" value="Segment"/>
</dbReference>
<reference key="1">
    <citation type="journal article" date="2005" name="J. Gen. Virol.">
        <title>A novel class of herpesvirus with bivalve hosts.</title>
        <authorList>
            <person name="Davison A.J."/>
            <person name="Trus B.L."/>
            <person name="Cheng N."/>
            <person name="Steven A.C."/>
            <person name="Watson M.S."/>
            <person name="Cunningham C."/>
            <person name="Le Deuff R.M."/>
            <person name="Renault T."/>
        </authorList>
    </citation>
    <scope>NUCLEOTIDE SEQUENCE [LARGE SCALE GENOMIC DNA]</scope>
</reference>
<feature type="chain" id="PRO_0000385117" description="Uncharacterized protein ORF101">
    <location>
        <begin position="1"/>
        <end position="209"/>
    </location>
</feature>